<dbReference type="EC" id="3.1.26.4"/>
<dbReference type="EMBL" id="AL355931">
    <property type="protein sequence ID" value="CAB91392.1"/>
    <property type="molecule type" value="Genomic_DNA"/>
</dbReference>
<dbReference type="EMBL" id="CM002237">
    <property type="protein sequence ID" value="EAA34136.2"/>
    <property type="status" value="ALT_SEQ"/>
    <property type="molecule type" value="Genomic_DNA"/>
</dbReference>
<dbReference type="PIR" id="T49591">
    <property type="entry name" value="T49591"/>
</dbReference>
<dbReference type="RefSeq" id="XP_963372.2">
    <property type="nucleotide sequence ID" value="XM_958279.3"/>
</dbReference>
<dbReference type="SMR" id="Q9P5X8"/>
<dbReference type="FunCoup" id="Q9P5X8">
    <property type="interactions" value="419"/>
</dbReference>
<dbReference type="STRING" id="367110.Q9P5X8"/>
<dbReference type="EnsemblFungi" id="EAA34136">
    <property type="protein sequence ID" value="EAA34136"/>
    <property type="gene ID" value="NCU09608"/>
</dbReference>
<dbReference type="GeneID" id="3879521"/>
<dbReference type="KEGG" id="ncr:NCU09608"/>
<dbReference type="HOGENOM" id="CLU_036532_0_0_1"/>
<dbReference type="InParanoid" id="Q9P5X8"/>
<dbReference type="OrthoDB" id="7462577at2759"/>
<dbReference type="Proteomes" id="UP000001805">
    <property type="component" value="Chromosome 6, Linkage Group II"/>
</dbReference>
<dbReference type="GO" id="GO:0032299">
    <property type="term" value="C:ribonuclease H2 complex"/>
    <property type="evidence" value="ECO:0000318"/>
    <property type="project" value="GO_Central"/>
</dbReference>
<dbReference type="GO" id="GO:0046872">
    <property type="term" value="F:metal ion binding"/>
    <property type="evidence" value="ECO:0007669"/>
    <property type="project" value="UniProtKB-KW"/>
</dbReference>
<dbReference type="GO" id="GO:0003723">
    <property type="term" value="F:RNA binding"/>
    <property type="evidence" value="ECO:0007669"/>
    <property type="project" value="InterPro"/>
</dbReference>
<dbReference type="GO" id="GO:0004523">
    <property type="term" value="F:RNA-DNA hybrid ribonuclease activity"/>
    <property type="evidence" value="ECO:0000318"/>
    <property type="project" value="GO_Central"/>
</dbReference>
<dbReference type="GO" id="GO:0043137">
    <property type="term" value="P:DNA replication, removal of RNA primer"/>
    <property type="evidence" value="ECO:0000318"/>
    <property type="project" value="GO_Central"/>
</dbReference>
<dbReference type="GO" id="GO:0006298">
    <property type="term" value="P:mismatch repair"/>
    <property type="evidence" value="ECO:0000318"/>
    <property type="project" value="GO_Central"/>
</dbReference>
<dbReference type="CDD" id="cd07181">
    <property type="entry name" value="RNase_HII_eukaryota_like"/>
    <property type="match status" value="1"/>
</dbReference>
<dbReference type="FunFam" id="1.10.10.460:FF:000001">
    <property type="entry name" value="Ribonuclease"/>
    <property type="match status" value="1"/>
</dbReference>
<dbReference type="FunFam" id="3.30.420.10:FF:000016">
    <property type="entry name" value="Ribonuclease"/>
    <property type="match status" value="1"/>
</dbReference>
<dbReference type="Gene3D" id="3.30.420.10">
    <property type="entry name" value="Ribonuclease H-like superfamily/Ribonuclease H"/>
    <property type="match status" value="1"/>
</dbReference>
<dbReference type="Gene3D" id="1.10.10.460">
    <property type="entry name" value="Ribonuclease hii. Domain 2"/>
    <property type="match status" value="1"/>
</dbReference>
<dbReference type="InterPro" id="IPR004649">
    <property type="entry name" value="RNase_H2_suA"/>
</dbReference>
<dbReference type="InterPro" id="IPR001352">
    <property type="entry name" value="RNase_HII/HIII"/>
</dbReference>
<dbReference type="InterPro" id="IPR024567">
    <property type="entry name" value="RNase_HII/HIII_dom"/>
</dbReference>
<dbReference type="InterPro" id="IPR023160">
    <property type="entry name" value="RNase_HII_hlx-loop-hlx_cap_dom"/>
</dbReference>
<dbReference type="InterPro" id="IPR012337">
    <property type="entry name" value="RNaseH-like_sf"/>
</dbReference>
<dbReference type="InterPro" id="IPR036397">
    <property type="entry name" value="RNaseH_sf"/>
</dbReference>
<dbReference type="NCBIfam" id="TIGR00729">
    <property type="entry name" value="ribonuclease HII"/>
    <property type="match status" value="1"/>
</dbReference>
<dbReference type="PANTHER" id="PTHR10954">
    <property type="entry name" value="RIBONUCLEASE H2 SUBUNIT A"/>
    <property type="match status" value="1"/>
</dbReference>
<dbReference type="PANTHER" id="PTHR10954:SF7">
    <property type="entry name" value="RIBONUCLEASE H2 SUBUNIT A"/>
    <property type="match status" value="1"/>
</dbReference>
<dbReference type="Pfam" id="PF01351">
    <property type="entry name" value="RNase_HII"/>
    <property type="match status" value="1"/>
</dbReference>
<dbReference type="SUPFAM" id="SSF53098">
    <property type="entry name" value="Ribonuclease H-like"/>
    <property type="match status" value="1"/>
</dbReference>
<dbReference type="PROSITE" id="PS51975">
    <property type="entry name" value="RNASE_H_2"/>
    <property type="match status" value="1"/>
</dbReference>
<reference key="1">
    <citation type="journal article" date="2003" name="Nucleic Acids Res.">
        <title>What's in the genome of a filamentous fungus? Analysis of the Neurospora genome sequence.</title>
        <authorList>
            <person name="Mannhaupt G."/>
            <person name="Montrone C."/>
            <person name="Haase D."/>
            <person name="Mewes H.-W."/>
            <person name="Aign V."/>
            <person name="Hoheisel J.D."/>
            <person name="Fartmann B."/>
            <person name="Nyakatura G."/>
            <person name="Kempken F."/>
            <person name="Maier J."/>
            <person name="Schulte U."/>
        </authorList>
    </citation>
    <scope>NUCLEOTIDE SEQUENCE [LARGE SCALE GENOMIC DNA]</scope>
    <source>
        <strain>ATCC 24698 / 74-OR23-1A / CBS 708.71 / DSM 1257 / FGSC 987</strain>
    </source>
</reference>
<reference key="2">
    <citation type="journal article" date="2003" name="Nature">
        <title>The genome sequence of the filamentous fungus Neurospora crassa.</title>
        <authorList>
            <person name="Galagan J.E."/>
            <person name="Calvo S.E."/>
            <person name="Borkovich K.A."/>
            <person name="Selker E.U."/>
            <person name="Read N.D."/>
            <person name="Jaffe D.B."/>
            <person name="FitzHugh W."/>
            <person name="Ma L.-J."/>
            <person name="Smirnov S."/>
            <person name="Purcell S."/>
            <person name="Rehman B."/>
            <person name="Elkins T."/>
            <person name="Engels R."/>
            <person name="Wang S."/>
            <person name="Nielsen C.B."/>
            <person name="Butler J."/>
            <person name="Endrizzi M."/>
            <person name="Qui D."/>
            <person name="Ianakiev P."/>
            <person name="Bell-Pedersen D."/>
            <person name="Nelson M.A."/>
            <person name="Werner-Washburne M."/>
            <person name="Selitrennikoff C.P."/>
            <person name="Kinsey J.A."/>
            <person name="Braun E.L."/>
            <person name="Zelter A."/>
            <person name="Schulte U."/>
            <person name="Kothe G.O."/>
            <person name="Jedd G."/>
            <person name="Mewes H.-W."/>
            <person name="Staben C."/>
            <person name="Marcotte E."/>
            <person name="Greenberg D."/>
            <person name="Roy A."/>
            <person name="Foley K."/>
            <person name="Naylor J."/>
            <person name="Stange-Thomann N."/>
            <person name="Barrett R."/>
            <person name="Gnerre S."/>
            <person name="Kamal M."/>
            <person name="Kamvysselis M."/>
            <person name="Mauceli E.W."/>
            <person name="Bielke C."/>
            <person name="Rudd S."/>
            <person name="Frishman D."/>
            <person name="Krystofova S."/>
            <person name="Rasmussen C."/>
            <person name="Metzenberg R.L."/>
            <person name="Perkins D.D."/>
            <person name="Kroken S."/>
            <person name="Cogoni C."/>
            <person name="Macino G."/>
            <person name="Catcheside D.E.A."/>
            <person name="Li W."/>
            <person name="Pratt R.J."/>
            <person name="Osmani S.A."/>
            <person name="DeSouza C.P.C."/>
            <person name="Glass N.L."/>
            <person name="Orbach M.J."/>
            <person name="Berglund J.A."/>
            <person name="Voelker R."/>
            <person name="Yarden O."/>
            <person name="Plamann M."/>
            <person name="Seiler S."/>
            <person name="Dunlap J.C."/>
            <person name="Radford A."/>
            <person name="Aramayo R."/>
            <person name="Natvig D.O."/>
            <person name="Alex L.A."/>
            <person name="Mannhaupt G."/>
            <person name="Ebbole D.J."/>
            <person name="Freitag M."/>
            <person name="Paulsen I."/>
            <person name="Sachs M.S."/>
            <person name="Lander E.S."/>
            <person name="Nusbaum C."/>
            <person name="Birren B.W."/>
        </authorList>
    </citation>
    <scope>NUCLEOTIDE SEQUENCE [LARGE SCALE GENOMIC DNA]</scope>
    <source>
        <strain>ATCC 24698 / 74-OR23-1A / CBS 708.71 / DSM 1257 / FGSC 987</strain>
    </source>
</reference>
<protein>
    <recommendedName>
        <fullName>Ribonuclease H2 subunit A</fullName>
        <shortName>RNase H2 subunit A</shortName>
        <ecNumber>3.1.26.4</ecNumber>
    </recommendedName>
    <alternativeName>
        <fullName>Ribonuclease HI large subunit</fullName>
        <shortName>RNase HI large subunit</shortName>
    </alternativeName>
    <alternativeName>
        <fullName>Ribonuclease HI subunit A</fullName>
    </alternativeName>
</protein>
<proteinExistence type="inferred from homology"/>
<feature type="chain" id="PRO_0000111716" description="Ribonuclease H2 subunit A">
    <location>
        <begin position="1"/>
        <end position="317"/>
    </location>
</feature>
<feature type="domain" description="RNase H type-2" evidence="2">
    <location>
        <begin position="43"/>
        <end position="270"/>
    </location>
</feature>
<feature type="binding site" evidence="1">
    <location>
        <position position="49"/>
    </location>
    <ligand>
        <name>a divalent metal cation</name>
        <dbReference type="ChEBI" id="CHEBI:60240"/>
    </ligand>
</feature>
<feature type="binding site" evidence="1">
    <location>
        <position position="50"/>
    </location>
    <ligand>
        <name>a divalent metal cation</name>
        <dbReference type="ChEBI" id="CHEBI:60240"/>
    </ligand>
</feature>
<feature type="binding site" evidence="1">
    <location>
        <position position="166"/>
    </location>
    <ligand>
        <name>a divalent metal cation</name>
        <dbReference type="ChEBI" id="CHEBI:60240"/>
    </ligand>
</feature>
<keyword id="KW-0255">Endonuclease</keyword>
<keyword id="KW-0378">Hydrolase</keyword>
<keyword id="KW-0479">Metal-binding</keyword>
<keyword id="KW-0540">Nuclease</keyword>
<keyword id="KW-1185">Reference proteome</keyword>
<comment type="function">
    <text>Endonuclease that specifically degrades the RNA of RNA-DNA hybrids. Participates in DNA replication.</text>
</comment>
<comment type="catalytic activity">
    <reaction>
        <text>Endonucleolytic cleavage to 5'-phosphomonoester.</text>
        <dbReference type="EC" id="3.1.26.4"/>
    </reaction>
</comment>
<comment type="cofactor">
    <cofactor evidence="1">
        <name>Mn(2+)</name>
        <dbReference type="ChEBI" id="CHEBI:29035"/>
    </cofactor>
    <cofactor evidence="1">
        <name>Mg(2+)</name>
        <dbReference type="ChEBI" id="CHEBI:18420"/>
    </cofactor>
    <text evidence="1">Manganese or magnesium. Binds 1 divalent metal ion per monomer in the absence of substrate. May bind a second metal ion after substrate binding.</text>
</comment>
<comment type="similarity">
    <text evidence="3">Belongs to the RNase HII family. Eukaryotic subfamily.</text>
</comment>
<comment type="sequence caution" evidence="3">
    <conflict type="erroneous gene model prediction">
        <sequence resource="EMBL-CDS" id="EAA34136"/>
    </conflict>
</comment>
<organism>
    <name type="scientific">Neurospora crassa (strain ATCC 24698 / 74-OR23-1A / CBS 708.71 / DSM 1257 / FGSC 987)</name>
    <dbReference type="NCBI Taxonomy" id="367110"/>
    <lineage>
        <taxon>Eukaryota</taxon>
        <taxon>Fungi</taxon>
        <taxon>Dikarya</taxon>
        <taxon>Ascomycota</taxon>
        <taxon>Pezizomycotina</taxon>
        <taxon>Sordariomycetes</taxon>
        <taxon>Sordariomycetidae</taxon>
        <taxon>Sordariales</taxon>
        <taxon>Sordariaceae</taxon>
        <taxon>Neurospora</taxon>
    </lineage>
</organism>
<gene>
    <name type="primary">rnh-201</name>
    <name type="ORF">B3E4.40</name>
    <name type="ORF">NCU09608</name>
</gene>
<sequence>MADIQDEAGPFLPPTISPPALLSGVSQTYFSPIPPQLLADNTPCCLGVDEAGRGPVLGPMVYSAFYLPLTLSDPLLKQKHSFDDSKVLTPAVRLSLMKELCTKDTELHDNCGYATSSLSPLSISSGMLKASKAQIYNLNQQAMDATIALIKGIYERGVNVTDIFIDTIGQPAAYQKKLERVFPTAKITVAKKADSLYPVVSAASVVAKVTRDIALEVLWADRTMAWGSGYPSDSKCVSWLKQNMHPVFGWGPECRFSWGTAKDMLETKGGVKVDWPEEEEEETQKLTDFFMAKRDQAEVDVDDLGTWFGAPAGVECF</sequence>
<evidence type="ECO:0000250" key="1"/>
<evidence type="ECO:0000255" key="2">
    <source>
        <dbReference type="PROSITE-ProRule" id="PRU01319"/>
    </source>
</evidence>
<evidence type="ECO:0000305" key="3"/>
<name>RNH2A_NEUCR</name>
<accession>Q9P5X8</accession>
<accession>Q7RVI7</accession>